<dbReference type="EC" id="2.7.1.130" evidence="1"/>
<dbReference type="EMBL" id="FM178380">
    <property type="protein sequence ID" value="CAQ81488.1"/>
    <property type="molecule type" value="Genomic_DNA"/>
</dbReference>
<dbReference type="RefSeq" id="WP_012552036.1">
    <property type="nucleotide sequence ID" value="NC_011313.1"/>
</dbReference>
<dbReference type="SMR" id="B6ES04"/>
<dbReference type="KEGG" id="vsa:VSAL_II0734"/>
<dbReference type="eggNOG" id="COG1663">
    <property type="taxonomic scope" value="Bacteria"/>
</dbReference>
<dbReference type="HOGENOM" id="CLU_038816_2_0_6"/>
<dbReference type="UniPathway" id="UPA00359">
    <property type="reaction ID" value="UER00482"/>
</dbReference>
<dbReference type="Proteomes" id="UP000001730">
    <property type="component" value="Chromosome 2"/>
</dbReference>
<dbReference type="GO" id="GO:0005886">
    <property type="term" value="C:plasma membrane"/>
    <property type="evidence" value="ECO:0007669"/>
    <property type="project" value="TreeGrafter"/>
</dbReference>
<dbReference type="GO" id="GO:0005524">
    <property type="term" value="F:ATP binding"/>
    <property type="evidence" value="ECO:0007669"/>
    <property type="project" value="UniProtKB-UniRule"/>
</dbReference>
<dbReference type="GO" id="GO:0009029">
    <property type="term" value="F:tetraacyldisaccharide 4'-kinase activity"/>
    <property type="evidence" value="ECO:0007669"/>
    <property type="project" value="UniProtKB-UniRule"/>
</dbReference>
<dbReference type="GO" id="GO:0009245">
    <property type="term" value="P:lipid A biosynthetic process"/>
    <property type="evidence" value="ECO:0007669"/>
    <property type="project" value="UniProtKB-UniRule"/>
</dbReference>
<dbReference type="GO" id="GO:0009244">
    <property type="term" value="P:lipopolysaccharide core region biosynthetic process"/>
    <property type="evidence" value="ECO:0007669"/>
    <property type="project" value="TreeGrafter"/>
</dbReference>
<dbReference type="HAMAP" id="MF_00409">
    <property type="entry name" value="LpxK"/>
    <property type="match status" value="1"/>
</dbReference>
<dbReference type="InterPro" id="IPR003758">
    <property type="entry name" value="LpxK"/>
</dbReference>
<dbReference type="InterPro" id="IPR027417">
    <property type="entry name" value="P-loop_NTPase"/>
</dbReference>
<dbReference type="NCBIfam" id="TIGR00682">
    <property type="entry name" value="lpxK"/>
    <property type="match status" value="1"/>
</dbReference>
<dbReference type="PANTHER" id="PTHR42724">
    <property type="entry name" value="TETRAACYLDISACCHARIDE 4'-KINASE"/>
    <property type="match status" value="1"/>
</dbReference>
<dbReference type="PANTHER" id="PTHR42724:SF1">
    <property type="entry name" value="TETRAACYLDISACCHARIDE 4'-KINASE, MITOCHONDRIAL-RELATED"/>
    <property type="match status" value="1"/>
</dbReference>
<dbReference type="Pfam" id="PF02606">
    <property type="entry name" value="LpxK"/>
    <property type="match status" value="1"/>
</dbReference>
<dbReference type="SUPFAM" id="SSF52540">
    <property type="entry name" value="P-loop containing nucleoside triphosphate hydrolases"/>
    <property type="match status" value="1"/>
</dbReference>
<keyword id="KW-0067">ATP-binding</keyword>
<keyword id="KW-0418">Kinase</keyword>
<keyword id="KW-0441">Lipid A biosynthesis</keyword>
<keyword id="KW-0444">Lipid biosynthesis</keyword>
<keyword id="KW-0443">Lipid metabolism</keyword>
<keyword id="KW-0547">Nucleotide-binding</keyword>
<keyword id="KW-0808">Transferase</keyword>
<reference key="1">
    <citation type="journal article" date="2008" name="BMC Genomics">
        <title>The genome sequence of the fish pathogen Aliivibrio salmonicida strain LFI1238 shows extensive evidence of gene decay.</title>
        <authorList>
            <person name="Hjerde E."/>
            <person name="Lorentzen M.S."/>
            <person name="Holden M.T."/>
            <person name="Seeger K."/>
            <person name="Paulsen S."/>
            <person name="Bason N."/>
            <person name="Churcher C."/>
            <person name="Harris D."/>
            <person name="Norbertczak H."/>
            <person name="Quail M.A."/>
            <person name="Sanders S."/>
            <person name="Thurston S."/>
            <person name="Parkhill J."/>
            <person name="Willassen N.P."/>
            <person name="Thomson N.R."/>
        </authorList>
    </citation>
    <scope>NUCLEOTIDE SEQUENCE [LARGE SCALE GENOMIC DNA]</scope>
    <source>
        <strain>LFI1238</strain>
    </source>
</reference>
<sequence length="335" mass="37207">MIEKIWFDNHILGKLMWPLLWPLSCLFKYVANKKKLDYFTGKKTAYKSSVPVVVVGNITAGGNGKTPVVVWLVEQLQLQGMKVGVASRGYGGKAPHYPYLLSNTTTPDISGDEPVLIKQRTKAHVAVAPVRSEAVKMLEEQGVDIVITDDGLQHYALQRDVEFIVIDGKRRFGNQAFIPLGPLREGLDRLASVDFLICNGEQPKTNEIAMTLEPSKAVNLVTGEKKSVSNLGELVAFAGIGHPPRFFDTLASLNADVVHTQGFVDHKAFEPEEIKNLMQYGEQLIMTEKDAVKCQSFAESSWWYLPVDASFPEEKAQQILNKIIEVKEQYGLSSS</sequence>
<feature type="chain" id="PRO_1000191519" description="Tetraacyldisaccharide 4'-kinase">
    <location>
        <begin position="1"/>
        <end position="335"/>
    </location>
</feature>
<feature type="binding site" evidence="1">
    <location>
        <begin position="59"/>
        <end position="66"/>
    </location>
    <ligand>
        <name>ATP</name>
        <dbReference type="ChEBI" id="CHEBI:30616"/>
    </ligand>
</feature>
<gene>
    <name evidence="1" type="primary">lpxK</name>
    <name type="ordered locus">VSAL_II0734</name>
</gene>
<comment type="function">
    <text evidence="1">Transfers the gamma-phosphate of ATP to the 4'-position of a tetraacyldisaccharide 1-phosphate intermediate (termed DS-1-P) to form tetraacyldisaccharide 1,4'-bis-phosphate (lipid IVA).</text>
</comment>
<comment type="catalytic activity">
    <reaction evidence="1">
        <text>a lipid A disaccharide + ATP = a lipid IVA + ADP + H(+)</text>
        <dbReference type="Rhea" id="RHEA:67840"/>
        <dbReference type="ChEBI" id="CHEBI:15378"/>
        <dbReference type="ChEBI" id="CHEBI:30616"/>
        <dbReference type="ChEBI" id="CHEBI:176343"/>
        <dbReference type="ChEBI" id="CHEBI:176425"/>
        <dbReference type="ChEBI" id="CHEBI:456216"/>
        <dbReference type="EC" id="2.7.1.130"/>
    </reaction>
</comment>
<comment type="pathway">
    <text evidence="1">Glycolipid biosynthesis; lipid IV(A) biosynthesis; lipid IV(A) from (3R)-3-hydroxytetradecanoyl-[acyl-carrier-protein] and UDP-N-acetyl-alpha-D-glucosamine: step 6/6.</text>
</comment>
<comment type="similarity">
    <text evidence="1">Belongs to the LpxK family.</text>
</comment>
<protein>
    <recommendedName>
        <fullName evidence="1">Tetraacyldisaccharide 4'-kinase</fullName>
        <ecNumber evidence="1">2.7.1.130</ecNumber>
    </recommendedName>
    <alternativeName>
        <fullName evidence="1">Lipid A 4'-kinase</fullName>
    </alternativeName>
</protein>
<accession>B6ES04</accession>
<evidence type="ECO:0000255" key="1">
    <source>
        <dbReference type="HAMAP-Rule" id="MF_00409"/>
    </source>
</evidence>
<name>LPXK_ALISL</name>
<proteinExistence type="inferred from homology"/>
<organism>
    <name type="scientific">Aliivibrio salmonicida (strain LFI1238)</name>
    <name type="common">Vibrio salmonicida (strain LFI1238)</name>
    <dbReference type="NCBI Taxonomy" id="316275"/>
    <lineage>
        <taxon>Bacteria</taxon>
        <taxon>Pseudomonadati</taxon>
        <taxon>Pseudomonadota</taxon>
        <taxon>Gammaproteobacteria</taxon>
        <taxon>Vibrionales</taxon>
        <taxon>Vibrionaceae</taxon>
        <taxon>Aliivibrio</taxon>
    </lineage>
</organism>